<name>Y1063_METJA</name>
<organism>
    <name type="scientific">Methanocaldococcus jannaschii (strain ATCC 43067 / DSM 2661 / JAL-1 / JCM 10045 / NBRC 100440)</name>
    <name type="common">Methanococcus jannaschii</name>
    <dbReference type="NCBI Taxonomy" id="243232"/>
    <lineage>
        <taxon>Archaea</taxon>
        <taxon>Methanobacteriati</taxon>
        <taxon>Methanobacteriota</taxon>
        <taxon>Methanomada group</taxon>
        <taxon>Methanococci</taxon>
        <taxon>Methanococcales</taxon>
        <taxon>Methanocaldococcaceae</taxon>
        <taxon>Methanocaldococcus</taxon>
    </lineage>
</organism>
<keyword id="KW-1185">Reference proteome</keyword>
<gene>
    <name type="ordered locus">MJ1063</name>
</gene>
<reference key="1">
    <citation type="journal article" date="1996" name="Science">
        <title>Complete genome sequence of the methanogenic archaeon, Methanococcus jannaschii.</title>
        <authorList>
            <person name="Bult C.J."/>
            <person name="White O."/>
            <person name="Olsen G.J."/>
            <person name="Zhou L."/>
            <person name="Fleischmann R.D."/>
            <person name="Sutton G.G."/>
            <person name="Blake J.A."/>
            <person name="FitzGerald L.M."/>
            <person name="Clayton R.A."/>
            <person name="Gocayne J.D."/>
            <person name="Kerlavage A.R."/>
            <person name="Dougherty B.A."/>
            <person name="Tomb J.-F."/>
            <person name="Adams M.D."/>
            <person name="Reich C.I."/>
            <person name="Overbeek R."/>
            <person name="Kirkness E.F."/>
            <person name="Weinstock K.G."/>
            <person name="Merrick J.M."/>
            <person name="Glodek A."/>
            <person name="Scott J.L."/>
            <person name="Geoghagen N.S.M."/>
            <person name="Weidman J.F."/>
            <person name="Fuhrmann J.L."/>
            <person name="Nguyen D."/>
            <person name="Utterback T.R."/>
            <person name="Kelley J.M."/>
            <person name="Peterson J.D."/>
            <person name="Sadow P.W."/>
            <person name="Hanna M.C."/>
            <person name="Cotton M.D."/>
            <person name="Roberts K.M."/>
            <person name="Hurst M.A."/>
            <person name="Kaine B.P."/>
            <person name="Borodovsky M."/>
            <person name="Klenk H.-P."/>
            <person name="Fraser C.M."/>
            <person name="Smith H.O."/>
            <person name="Woese C.R."/>
            <person name="Venter J.C."/>
        </authorList>
    </citation>
    <scope>NUCLEOTIDE SEQUENCE [LARGE SCALE GENOMIC DNA]</scope>
    <source>
        <strain>ATCC 43067 / DSM 2661 / JAL-1 / JCM 10045 / NBRC 100440</strain>
    </source>
</reference>
<sequence>MKIIGIIQARTGSKRLKNKVLLKLGDRCILEILLERLKKSKKLDDIIVATTIKKEDNAIVELCNSLGVNVFRGSEKDVLDRFYNASKFYSGDVIVRITGDNPLTSIELIDKQVEYLLKNNFDYVSTKNIILGLSSEVFTFDALEKAWKNAKEKYQREHVTPYIYENPNLFKVFYLEPPEYLKREGIRLTIDTIKDFKLYLELQKHFDLINVDIRQIIDFLDKNPQIKNINSNVRQKSYREVEE</sequence>
<accession>Q58463</accession>
<protein>
    <recommendedName>
        <fullName>Uncharacterized protein MJ1063</fullName>
    </recommendedName>
</protein>
<feature type="chain" id="PRO_0000213212" description="Uncharacterized protein MJ1063">
    <location>
        <begin position="1"/>
        <end position="243"/>
    </location>
</feature>
<dbReference type="EMBL" id="L77117">
    <property type="protein sequence ID" value="AAB99066.1"/>
    <property type="molecule type" value="Genomic_DNA"/>
</dbReference>
<dbReference type="PIR" id="F64432">
    <property type="entry name" value="F64432"/>
</dbReference>
<dbReference type="RefSeq" id="WP_010870576.1">
    <property type="nucleotide sequence ID" value="NC_000909.1"/>
</dbReference>
<dbReference type="SMR" id="Q58463"/>
<dbReference type="FunCoup" id="Q58463">
    <property type="interactions" value="2"/>
</dbReference>
<dbReference type="STRING" id="243232.MJ_1063"/>
<dbReference type="PaxDb" id="243232-MJ_1063"/>
<dbReference type="DNASU" id="1451960"/>
<dbReference type="EnsemblBacteria" id="AAB99066">
    <property type="protein sequence ID" value="AAB99066"/>
    <property type="gene ID" value="MJ_1063"/>
</dbReference>
<dbReference type="GeneID" id="1451960"/>
<dbReference type="KEGG" id="mja:MJ_1063"/>
<dbReference type="eggNOG" id="arCOG04817">
    <property type="taxonomic scope" value="Archaea"/>
</dbReference>
<dbReference type="HOGENOM" id="CLU_072501_0_0_2"/>
<dbReference type="InParanoid" id="Q58463"/>
<dbReference type="OrthoDB" id="10155at2157"/>
<dbReference type="PhylomeDB" id="Q58463"/>
<dbReference type="Proteomes" id="UP000000805">
    <property type="component" value="Chromosome"/>
</dbReference>
<dbReference type="GO" id="GO:0005829">
    <property type="term" value="C:cytosol"/>
    <property type="evidence" value="ECO:0000318"/>
    <property type="project" value="GO_Central"/>
</dbReference>
<dbReference type="CDD" id="cd02518">
    <property type="entry name" value="GT2_SpsF"/>
    <property type="match status" value="1"/>
</dbReference>
<dbReference type="FunFam" id="3.90.550.10:FF:000188">
    <property type="entry name" value="Polysaccharide biosynthesis protein"/>
    <property type="match status" value="1"/>
</dbReference>
<dbReference type="Gene3D" id="3.90.550.10">
    <property type="entry name" value="Spore Coat Polysaccharide Biosynthesis Protein SpsA, Chain A"/>
    <property type="match status" value="1"/>
</dbReference>
<dbReference type="InterPro" id="IPR003329">
    <property type="entry name" value="Cytidylyl_trans"/>
</dbReference>
<dbReference type="InterPro" id="IPR029044">
    <property type="entry name" value="Nucleotide-diphossugar_trans"/>
</dbReference>
<dbReference type="PANTHER" id="PTHR42866">
    <property type="entry name" value="3-DEOXY-MANNO-OCTULOSONATE CYTIDYLYLTRANSFERASE"/>
    <property type="match status" value="1"/>
</dbReference>
<dbReference type="PANTHER" id="PTHR42866:SF1">
    <property type="entry name" value="SPORE COAT POLYSACCHARIDE BIOSYNTHESIS PROTEIN SPSF"/>
    <property type="match status" value="1"/>
</dbReference>
<dbReference type="Pfam" id="PF02348">
    <property type="entry name" value="CTP_transf_3"/>
    <property type="match status" value="1"/>
</dbReference>
<dbReference type="SUPFAM" id="SSF53448">
    <property type="entry name" value="Nucleotide-diphospho-sugar transferases"/>
    <property type="match status" value="1"/>
</dbReference>
<proteinExistence type="predicted"/>